<protein>
    <recommendedName>
        <fullName evidence="1">Na(+)/H(+) antiporter NhaB</fullName>
    </recommendedName>
    <alternativeName>
        <fullName evidence="1">Sodium/proton antiporter NhaB</fullName>
    </alternativeName>
</protein>
<organism>
    <name type="scientific">Shewanella sp. (strain W3-18-1)</name>
    <dbReference type="NCBI Taxonomy" id="351745"/>
    <lineage>
        <taxon>Bacteria</taxon>
        <taxon>Pseudomonadati</taxon>
        <taxon>Pseudomonadota</taxon>
        <taxon>Gammaproteobacteria</taxon>
        <taxon>Alteromonadales</taxon>
        <taxon>Shewanellaceae</taxon>
        <taxon>Shewanella</taxon>
    </lineage>
</organism>
<accession>A1RKH2</accession>
<sequence length="528" mass="57494">MPLTMSQAFIGNFLGNSPKWYKIAILSFLIINPILFFYVSPFVAGWVLVLEFIFTLAMALKCYPLQPGGLLAIEAVAIGMTSANQVLHEIEANLEVLLLLVFMVAGIYFMKQLLLFAFTKIITKVRSKILVSLMFCLTSAFLSAFLDALTVIAVIIAVAVGFYAIYHKVASGKDFSAVHDHTSESNTQLNNSELESFRGFLRNLLMHAGVGTALGGVCTMVGEPQNLIIAAQANWQFGEFVVRMSPVTVPVLIAGILTCLLVEKFRIFGYGAKLPDAVHKILCDYAAHEDAHRTNKDKMKLVIQVLVGVWLIAGLALHLASVGLVGLSVIILTTAFNGITDEHALGKAFEEALPFTALLAVFFAVVAVIIDQHLFAPVIQWALSYEGNTQLVIFYIANGLLSMVSDNVFVGTVYINEVKAALIDGQITRDQFDLLAVAINTGTNLPSVATPNGQAAFLFLLTSALAPLIRLSYGRMVWMALPYTIVLSVVGVLAIETGFLEQATQYFYDSHMIIHHSAKDVIAPLTSH</sequence>
<reference key="1">
    <citation type="submission" date="2006-12" db="EMBL/GenBank/DDBJ databases">
        <title>Complete sequence of Shewanella sp. W3-18-1.</title>
        <authorList>
            <consortium name="US DOE Joint Genome Institute"/>
            <person name="Copeland A."/>
            <person name="Lucas S."/>
            <person name="Lapidus A."/>
            <person name="Barry K."/>
            <person name="Detter J.C."/>
            <person name="Glavina del Rio T."/>
            <person name="Hammon N."/>
            <person name="Israni S."/>
            <person name="Dalin E."/>
            <person name="Tice H."/>
            <person name="Pitluck S."/>
            <person name="Chain P."/>
            <person name="Malfatti S."/>
            <person name="Shin M."/>
            <person name="Vergez L."/>
            <person name="Schmutz J."/>
            <person name="Larimer F."/>
            <person name="Land M."/>
            <person name="Hauser L."/>
            <person name="Kyrpides N."/>
            <person name="Lykidis A."/>
            <person name="Tiedje J."/>
            <person name="Richardson P."/>
        </authorList>
    </citation>
    <scope>NUCLEOTIDE SEQUENCE [LARGE SCALE GENOMIC DNA]</scope>
    <source>
        <strain>W3-18-1</strain>
    </source>
</reference>
<comment type="function">
    <text evidence="1">Na(+)/H(+) antiporter that extrudes sodium in exchange for external protons.</text>
</comment>
<comment type="catalytic activity">
    <reaction evidence="1">
        <text>2 Na(+)(in) + 3 H(+)(out) = 2 Na(+)(out) + 3 H(+)(in)</text>
        <dbReference type="Rhea" id="RHEA:29247"/>
        <dbReference type="ChEBI" id="CHEBI:15378"/>
        <dbReference type="ChEBI" id="CHEBI:29101"/>
    </reaction>
    <physiologicalReaction direction="left-to-right" evidence="1">
        <dbReference type="Rhea" id="RHEA:29248"/>
    </physiologicalReaction>
</comment>
<comment type="subcellular location">
    <subcellularLocation>
        <location evidence="1">Cell inner membrane</location>
        <topology evidence="1">Multi-pass membrane protein</topology>
    </subcellularLocation>
</comment>
<comment type="similarity">
    <text evidence="1">Belongs to the NhaB Na(+)/H(+) (TC 2.A.34) antiporter family.</text>
</comment>
<dbReference type="EMBL" id="CP000503">
    <property type="protein sequence ID" value="ABM25167.1"/>
    <property type="molecule type" value="Genomic_DNA"/>
</dbReference>
<dbReference type="RefSeq" id="WP_011789632.1">
    <property type="nucleotide sequence ID" value="NC_008750.1"/>
</dbReference>
<dbReference type="SMR" id="A1RKH2"/>
<dbReference type="KEGG" id="shw:Sputw3181_2343"/>
<dbReference type="HOGENOM" id="CLU_041110_0_0_6"/>
<dbReference type="Proteomes" id="UP000002597">
    <property type="component" value="Chromosome"/>
</dbReference>
<dbReference type="GO" id="GO:0005886">
    <property type="term" value="C:plasma membrane"/>
    <property type="evidence" value="ECO:0007669"/>
    <property type="project" value="UniProtKB-SubCell"/>
</dbReference>
<dbReference type="GO" id="GO:0015385">
    <property type="term" value="F:sodium:proton antiporter activity"/>
    <property type="evidence" value="ECO:0007669"/>
    <property type="project" value="InterPro"/>
</dbReference>
<dbReference type="HAMAP" id="MF_01599">
    <property type="entry name" value="NhaB"/>
    <property type="match status" value="1"/>
</dbReference>
<dbReference type="InterPro" id="IPR004671">
    <property type="entry name" value="Na+/H+_antiporter_NhaB"/>
</dbReference>
<dbReference type="NCBIfam" id="TIGR00774">
    <property type="entry name" value="NhaB"/>
    <property type="match status" value="1"/>
</dbReference>
<dbReference type="NCBIfam" id="NF007093">
    <property type="entry name" value="PRK09547.1"/>
    <property type="match status" value="1"/>
</dbReference>
<dbReference type="PANTHER" id="PTHR43302:SF1">
    <property type="entry name" value="NA(+)_H(+) ANTIPORTER NHAB"/>
    <property type="match status" value="1"/>
</dbReference>
<dbReference type="PANTHER" id="PTHR43302">
    <property type="entry name" value="TRANSPORTER ARSB-RELATED"/>
    <property type="match status" value="1"/>
</dbReference>
<dbReference type="Pfam" id="PF06450">
    <property type="entry name" value="NhaB"/>
    <property type="match status" value="1"/>
</dbReference>
<name>NHAB_SHESW</name>
<proteinExistence type="inferred from homology"/>
<gene>
    <name evidence="1" type="primary">nhaB</name>
    <name type="ordered locus">Sputw3181_2343</name>
</gene>
<feature type="chain" id="PRO_0000333138" description="Na(+)/H(+) antiporter NhaB">
    <location>
        <begin position="1"/>
        <end position="528"/>
    </location>
</feature>
<feature type="transmembrane region" description="Helical" evidence="1">
    <location>
        <begin position="10"/>
        <end position="30"/>
    </location>
</feature>
<feature type="transmembrane region" description="Helical" evidence="1">
    <location>
        <begin position="63"/>
        <end position="83"/>
    </location>
</feature>
<feature type="transmembrane region" description="Helical" evidence="1">
    <location>
        <begin position="96"/>
        <end position="116"/>
    </location>
</feature>
<feature type="transmembrane region" description="Helical" evidence="1">
    <location>
        <begin position="131"/>
        <end position="165"/>
    </location>
</feature>
<feature type="transmembrane region" description="Helical" evidence="1">
    <location>
        <begin position="204"/>
        <end position="224"/>
    </location>
</feature>
<feature type="transmembrane region" description="Helical" evidence="1">
    <location>
        <begin position="240"/>
        <end position="260"/>
    </location>
</feature>
<feature type="transmembrane region" description="Helical" evidence="1">
    <location>
        <begin position="305"/>
        <end position="325"/>
    </location>
</feature>
<feature type="transmembrane region" description="Helical" evidence="1">
    <location>
        <begin position="359"/>
        <end position="379"/>
    </location>
</feature>
<feature type="transmembrane region" description="Helical" evidence="1">
    <location>
        <begin position="391"/>
        <end position="411"/>
    </location>
</feature>
<feature type="transmembrane region" description="Helical" evidence="1">
    <location>
        <begin position="449"/>
        <end position="469"/>
    </location>
</feature>
<feature type="transmembrane region" description="Helical" evidence="1">
    <location>
        <begin position="476"/>
        <end position="496"/>
    </location>
</feature>
<keyword id="KW-0050">Antiport</keyword>
<keyword id="KW-0997">Cell inner membrane</keyword>
<keyword id="KW-1003">Cell membrane</keyword>
<keyword id="KW-0406">Ion transport</keyword>
<keyword id="KW-0472">Membrane</keyword>
<keyword id="KW-0915">Sodium</keyword>
<keyword id="KW-0739">Sodium transport</keyword>
<keyword id="KW-0812">Transmembrane</keyword>
<keyword id="KW-1133">Transmembrane helix</keyword>
<keyword id="KW-0813">Transport</keyword>
<evidence type="ECO:0000255" key="1">
    <source>
        <dbReference type="HAMAP-Rule" id="MF_01599"/>
    </source>
</evidence>